<reference key="1">
    <citation type="journal article" date="2006" name="Toxicon">
        <title>Molecular diversity of disintegrin-like domains within metalloproteinase precursors of Bothrops jararaca.</title>
        <authorList>
            <person name="Cidade D.A.P."/>
            <person name="Wermelinger L.S."/>
            <person name="Lobo-Hajdu G."/>
            <person name="Davila A.M.R."/>
            <person name="Bon C."/>
            <person name="Zingali R.B."/>
            <person name="Albano R.M."/>
        </authorList>
    </citation>
    <scope>NUCLEOTIDE SEQUENCE [MRNA]</scope>
    <scope>MASS SPECTROMETRY</scope>
    <scope>SUBCELLULAR LOCATION</scope>
    <source>
        <tissue>Venom</tissue>
        <tissue>Venom gland</tissue>
    </source>
</reference>
<reference key="2">
    <citation type="journal article" date="1993" name="J. Biol. Chem.">
        <title>Characterization of the integrin specificities of disintegrins isolated from American pit viper venoms.</title>
        <authorList>
            <person name="Scarborough R.M."/>
            <person name="Rose J.W."/>
            <person name="Naughton M.A."/>
            <person name="Phillips D.R."/>
            <person name="Nannizzi L."/>
            <person name="Arfsten A."/>
            <person name="Campbell A.M."/>
            <person name="Charo I.F."/>
        </authorList>
    </citation>
    <scope>PROTEIN SEQUENCE OF 89-161</scope>
    <scope>FUNCTION</scope>
    <scope>SUBCELLULAR LOCATION</scope>
    <source>
        <tissue>Venom</tissue>
    </source>
</reference>
<accession>P31989</accession>
<accession>Q0NZX4</accession>
<protein>
    <recommendedName>
        <fullName>Zinc metalloproteinase/disintegrin</fullName>
    </recommendedName>
    <component>
        <recommendedName>
            <fullName>Snake venom metalloproteinase</fullName>
            <shortName>SVMP</shortName>
            <ecNumber>3.4.24.-</ecNumber>
        </recommendedName>
    </component>
    <component>
        <recommendedName>
            <fullName evidence="7">Disintegrin jararacin</fullName>
        </recommendedName>
        <alternativeName>
            <fullName>Platelet aggregation activation inhibitor</fullName>
        </alternativeName>
    </component>
    <component>
        <recommendedName>
            <fullName>Disintegrin jararacin-AGEEC</fullName>
        </recommendedName>
    </component>
    <component>
        <recommendedName>
            <fullName>Disintegrin jararacin-GEEC</fullName>
        </recommendedName>
    </component>
    <component>
        <recommendedName>
            <fullName>Disintegrin jararacin-EC</fullName>
        </recommendedName>
    </component>
</protein>
<sequence>ERDLLVAVTMDHELGHNLGIRHDTGSCSCGGYSCVMSPVISHDISKYFSDCSYIQCWDFIMKENPQCILNKHLRTDTVSTPVSGNELLEAGEECDCGTPGNPCCDAATCKLRPGAQCAEGLCCDQCRFKGAGKICRRARGDNPDDRCTGQSADCPRNRFHA</sequence>
<dbReference type="EC" id="3.4.24.-"/>
<dbReference type="EMBL" id="DQ375442">
    <property type="protein sequence ID" value="ABD34835.1"/>
    <property type="molecule type" value="mRNA"/>
</dbReference>
<dbReference type="SMR" id="P31989"/>
<dbReference type="GO" id="GO:0005576">
    <property type="term" value="C:extracellular region"/>
    <property type="evidence" value="ECO:0007669"/>
    <property type="project" value="UniProtKB-SubCell"/>
</dbReference>
<dbReference type="GO" id="GO:0005886">
    <property type="term" value="C:plasma membrane"/>
    <property type="evidence" value="ECO:0007669"/>
    <property type="project" value="TreeGrafter"/>
</dbReference>
<dbReference type="GO" id="GO:0046872">
    <property type="term" value="F:metal ion binding"/>
    <property type="evidence" value="ECO:0007669"/>
    <property type="project" value="UniProtKB-KW"/>
</dbReference>
<dbReference type="GO" id="GO:0004222">
    <property type="term" value="F:metalloendopeptidase activity"/>
    <property type="evidence" value="ECO:0007669"/>
    <property type="project" value="InterPro"/>
</dbReference>
<dbReference type="GO" id="GO:0090729">
    <property type="term" value="F:toxin activity"/>
    <property type="evidence" value="ECO:0007669"/>
    <property type="project" value="UniProtKB-KW"/>
</dbReference>
<dbReference type="GO" id="GO:0006508">
    <property type="term" value="P:proteolysis"/>
    <property type="evidence" value="ECO:0007669"/>
    <property type="project" value="UniProtKB-KW"/>
</dbReference>
<dbReference type="FunFam" id="4.10.70.10:FF:000005">
    <property type="entry name" value="Zinc metalloproteinase/disintegrin"/>
    <property type="match status" value="1"/>
</dbReference>
<dbReference type="Gene3D" id="3.40.390.10">
    <property type="entry name" value="Collagenase (Catalytic Domain)"/>
    <property type="match status" value="1"/>
</dbReference>
<dbReference type="Gene3D" id="4.10.70.10">
    <property type="entry name" value="Disintegrin domain"/>
    <property type="match status" value="1"/>
</dbReference>
<dbReference type="InterPro" id="IPR018358">
    <property type="entry name" value="Disintegrin_CS"/>
</dbReference>
<dbReference type="InterPro" id="IPR001762">
    <property type="entry name" value="Disintegrin_dom"/>
</dbReference>
<dbReference type="InterPro" id="IPR036436">
    <property type="entry name" value="Disintegrin_dom_sf"/>
</dbReference>
<dbReference type="InterPro" id="IPR024079">
    <property type="entry name" value="MetalloPept_cat_dom_sf"/>
</dbReference>
<dbReference type="InterPro" id="IPR001590">
    <property type="entry name" value="Peptidase_M12B"/>
</dbReference>
<dbReference type="PANTHER" id="PTHR11905">
    <property type="entry name" value="ADAM A DISINTEGRIN AND METALLOPROTEASE DOMAIN"/>
    <property type="match status" value="1"/>
</dbReference>
<dbReference type="PANTHER" id="PTHR11905:SF32">
    <property type="entry name" value="DISINTEGRIN AND METALLOPROTEINASE DOMAIN-CONTAINING PROTEIN 28"/>
    <property type="match status" value="1"/>
</dbReference>
<dbReference type="Pfam" id="PF00200">
    <property type="entry name" value="Disintegrin"/>
    <property type="match status" value="1"/>
</dbReference>
<dbReference type="Pfam" id="PF01421">
    <property type="entry name" value="Reprolysin"/>
    <property type="match status" value="1"/>
</dbReference>
<dbReference type="PRINTS" id="PR00289">
    <property type="entry name" value="DISINTEGRIN"/>
</dbReference>
<dbReference type="SMART" id="SM00050">
    <property type="entry name" value="DISIN"/>
    <property type="match status" value="1"/>
</dbReference>
<dbReference type="SUPFAM" id="SSF57552">
    <property type="entry name" value="Blood coagulation inhibitor (disintegrin)"/>
    <property type="match status" value="1"/>
</dbReference>
<dbReference type="SUPFAM" id="SSF55486">
    <property type="entry name" value="Metalloproteases ('zincins'), catalytic domain"/>
    <property type="match status" value="1"/>
</dbReference>
<dbReference type="PROSITE" id="PS50215">
    <property type="entry name" value="ADAM_MEPRO"/>
    <property type="match status" value="1"/>
</dbReference>
<dbReference type="PROSITE" id="PS00427">
    <property type="entry name" value="DISINTEGRIN_1"/>
    <property type="match status" value="1"/>
</dbReference>
<dbReference type="PROSITE" id="PS50214">
    <property type="entry name" value="DISINTEGRIN_2"/>
    <property type="match status" value="1"/>
</dbReference>
<keyword id="KW-1217">Cell adhesion impairing toxin</keyword>
<keyword id="KW-0903">Direct protein sequencing</keyword>
<keyword id="KW-1015">Disulfide bond</keyword>
<keyword id="KW-1199">Hemostasis impairing toxin</keyword>
<keyword id="KW-0378">Hydrolase</keyword>
<keyword id="KW-0479">Metal-binding</keyword>
<keyword id="KW-0482">Metalloprotease</keyword>
<keyword id="KW-1201">Platelet aggregation inhibiting toxin</keyword>
<keyword id="KW-0645">Protease</keyword>
<keyword id="KW-0964">Secreted</keyword>
<keyword id="KW-0800">Toxin</keyword>
<keyword id="KW-0862">Zinc</keyword>
<keyword id="KW-0865">Zymogen</keyword>
<organism>
    <name type="scientific">Bothrops jararaca</name>
    <name type="common">Jararaca</name>
    <name type="synonym">Bothrops jajaraca</name>
    <dbReference type="NCBI Taxonomy" id="8724"/>
    <lineage>
        <taxon>Eukaryota</taxon>
        <taxon>Metazoa</taxon>
        <taxon>Chordata</taxon>
        <taxon>Craniata</taxon>
        <taxon>Vertebrata</taxon>
        <taxon>Euteleostomi</taxon>
        <taxon>Lepidosauria</taxon>
        <taxon>Squamata</taxon>
        <taxon>Bifurcata</taxon>
        <taxon>Unidentata</taxon>
        <taxon>Episquamata</taxon>
        <taxon>Toxicofera</taxon>
        <taxon>Serpentes</taxon>
        <taxon>Colubroidea</taxon>
        <taxon>Viperidae</taxon>
        <taxon>Crotalinae</taxon>
        <taxon>Bothrops</taxon>
    </lineage>
</organism>
<evidence type="ECO:0000250" key="1"/>
<evidence type="ECO:0000250" key="2">
    <source>
        <dbReference type="UniProtKB" id="Q0NZX5"/>
    </source>
</evidence>
<evidence type="ECO:0000255" key="3">
    <source>
        <dbReference type="PROSITE-ProRule" id="PRU00068"/>
    </source>
</evidence>
<evidence type="ECO:0000255" key="4">
    <source>
        <dbReference type="PROSITE-ProRule" id="PRU00276"/>
    </source>
</evidence>
<evidence type="ECO:0000269" key="5">
    <source>
    </source>
</evidence>
<evidence type="ECO:0000269" key="6">
    <source>
    </source>
</evidence>
<evidence type="ECO:0000303" key="7">
    <source>
    </source>
</evidence>
<evidence type="ECO:0000305" key="8"/>
<evidence type="ECO:0000305" key="9">
    <source>
    </source>
</evidence>
<evidence type="ECO:0000305" key="10">
    <source>
    </source>
</evidence>
<comment type="function">
    <molecule>Snake venom metalloproteinase</molecule>
    <text evidence="1">Impairs hemostasis in the envenomed animal.</text>
</comment>
<comment type="function">
    <text evidence="1">Disintegrin: inhibit platelet aggregation induced by ADP, thrombin, platelet-activating factor and collagen. Acts by inhibiting fibrinogen interaction with platelet receptors GPIIb/GPIIIa (ITGA2B/ITGB3) (By similarity).</text>
</comment>
<comment type="subunit">
    <text evidence="1">Monomer.</text>
</comment>
<comment type="subcellular location">
    <subcellularLocation>
        <location evidence="5 6">Secreted</location>
    </subcellularLocation>
</comment>
<comment type="tissue specificity">
    <text evidence="9 10">Expressed by the venom gland.</text>
</comment>
<comment type="mass spectrometry">
    <molecule>Disintegrin jararacin</molecule>
</comment>
<comment type="similarity">
    <text evidence="8">Belongs to the venom metalloproteinase (M12B) family. P-II subfamily. P-IIa sub-subfamily.</text>
</comment>
<feature type="chain" id="PRO_0000318085" description="Snake venom metalloproteinase">
    <location>
        <begin position="1" status="less than"/>
        <end position="72"/>
    </location>
</feature>
<feature type="propeptide" id="PRO_0000318086" evidence="1">
    <location>
        <begin position="73"/>
        <end position="88"/>
    </location>
</feature>
<feature type="chain" id="PRO_0000101787" description="Disintegrin jararacin" evidence="6">
    <location>
        <begin position="89"/>
        <end position="161"/>
    </location>
</feature>
<feature type="chain" id="PRO_0000318087" description="Disintegrin jararacin-AGEEC">
    <location>
        <begin position="90"/>
        <end position="161"/>
    </location>
</feature>
<feature type="chain" id="PRO_0000318088" description="Disintegrin jararacin-GEEC">
    <location>
        <begin position="91"/>
        <end position="161"/>
    </location>
</feature>
<feature type="chain" id="PRO_0000318089" description="Disintegrin jararacin-EC">
    <location>
        <begin position="93"/>
        <end position="161"/>
    </location>
</feature>
<feature type="domain" description="Peptidase M12B" evidence="4">
    <location>
        <begin position="1" status="less than"/>
        <end position="72"/>
    </location>
</feature>
<feature type="domain" description="Disintegrin" evidence="3">
    <location>
        <begin position="89"/>
        <end position="161"/>
    </location>
</feature>
<feature type="short sequence motif" description="Cell attachment site">
    <location>
        <begin position="139"/>
        <end position="141"/>
    </location>
</feature>
<feature type="active site" evidence="4">
    <location>
        <position position="13"/>
    </location>
</feature>
<feature type="binding site" evidence="4">
    <location>
        <position position="12"/>
    </location>
    <ligand>
        <name>Zn(2+)</name>
        <dbReference type="ChEBI" id="CHEBI:29105"/>
        <note>catalytic</note>
    </ligand>
</feature>
<feature type="binding site" evidence="4">
    <location>
        <position position="16"/>
    </location>
    <ligand>
        <name>Zn(2+)</name>
        <dbReference type="ChEBI" id="CHEBI:29105"/>
        <note>catalytic</note>
    </ligand>
</feature>
<feature type="binding site" evidence="4">
    <location>
        <position position="22"/>
    </location>
    <ligand>
        <name>Zn(2+)</name>
        <dbReference type="ChEBI" id="CHEBI:29105"/>
        <note>catalytic</note>
    </ligand>
</feature>
<feature type="disulfide bond" evidence="4">
    <location>
        <begin position="27"/>
        <end position="51"/>
    </location>
</feature>
<feature type="disulfide bond" evidence="4">
    <location>
        <begin position="29"/>
        <end position="34"/>
    </location>
</feature>
<feature type="disulfide bond" evidence="2">
    <location>
        <begin position="94"/>
        <end position="109"/>
    </location>
</feature>
<feature type="disulfide bond" evidence="2">
    <location>
        <begin position="96"/>
        <end position="104"/>
    </location>
</feature>
<feature type="disulfide bond" evidence="2">
    <location>
        <begin position="103"/>
        <end position="126"/>
    </location>
</feature>
<feature type="disulfide bond" evidence="2">
    <location>
        <begin position="117"/>
        <end position="123"/>
    </location>
</feature>
<feature type="disulfide bond" evidence="2">
    <location>
        <begin position="122"/>
        <end position="147"/>
    </location>
</feature>
<feature type="disulfide bond" evidence="2 3">
    <location>
        <begin position="135"/>
        <end position="154"/>
    </location>
</feature>
<feature type="non-terminal residue">
    <location>
        <position position="1"/>
    </location>
</feature>
<proteinExistence type="evidence at protein level"/>
<name>VM2JC_BOTJA</name>